<feature type="chain" id="PRO_0000123706" description="Isoprenyl transferase">
    <location>
        <begin position="1"/>
        <end position="228"/>
    </location>
</feature>
<feature type="active site" evidence="1">
    <location>
        <position position="9"/>
    </location>
</feature>
<feature type="active site" description="Proton acceptor" evidence="1">
    <location>
        <position position="57"/>
    </location>
</feature>
<feature type="binding site" evidence="1">
    <location>
        <position position="9"/>
    </location>
    <ligand>
        <name>Mg(2+)</name>
        <dbReference type="ChEBI" id="CHEBI:18420"/>
    </ligand>
</feature>
<feature type="binding site" evidence="1">
    <location>
        <begin position="10"/>
        <end position="13"/>
    </location>
    <ligand>
        <name>substrate</name>
    </ligand>
</feature>
<feature type="binding site" evidence="1">
    <location>
        <position position="14"/>
    </location>
    <ligand>
        <name>substrate</name>
    </ligand>
</feature>
<feature type="binding site" evidence="1">
    <location>
        <position position="22"/>
    </location>
    <ligand>
        <name>substrate</name>
    </ligand>
</feature>
<feature type="binding site" evidence="1">
    <location>
        <position position="26"/>
    </location>
    <ligand>
        <name>substrate</name>
    </ligand>
</feature>
<feature type="binding site" evidence="1">
    <location>
        <begin position="54"/>
        <end position="56"/>
    </location>
    <ligand>
        <name>substrate</name>
    </ligand>
</feature>
<feature type="binding site" evidence="1">
    <location>
        <position position="58"/>
    </location>
    <ligand>
        <name>substrate</name>
    </ligand>
</feature>
<feature type="binding site" evidence="1">
    <location>
        <position position="60"/>
    </location>
    <ligand>
        <name>substrate</name>
    </ligand>
</feature>
<feature type="binding site" evidence="1">
    <location>
        <position position="175"/>
    </location>
    <ligand>
        <name>substrate</name>
    </ligand>
</feature>
<feature type="binding site" evidence="1">
    <location>
        <begin position="181"/>
        <end position="183"/>
    </location>
    <ligand>
        <name>substrate</name>
    </ligand>
</feature>
<feature type="binding site" evidence="1">
    <location>
        <position position="194"/>
    </location>
    <ligand>
        <name>Mg(2+)</name>
        <dbReference type="ChEBI" id="CHEBI:18420"/>
    </ligand>
</feature>
<organism>
    <name type="scientific">Treponema pallidum (strain Nichols)</name>
    <dbReference type="NCBI Taxonomy" id="243276"/>
    <lineage>
        <taxon>Bacteria</taxon>
        <taxon>Pseudomonadati</taxon>
        <taxon>Spirochaetota</taxon>
        <taxon>Spirochaetia</taxon>
        <taxon>Spirochaetales</taxon>
        <taxon>Treponemataceae</taxon>
        <taxon>Treponema</taxon>
    </lineage>
</organism>
<name>ISPT_TREPA</name>
<sequence length="228" mass="26270">MQHVAIIMDGNGRWAERRGLRRSAGHRRGLQTAREIVAALCAIRVPFVTLYVFSTENWKRSAHEVHFLMNLIRWYLKKEMSFYVEHAIRVVHLGCAQTLPPDVRSQIEYVVERTRSHRGTTVALAINYGGKDEILRAVKKVLCSTSCPDGELLTEEAFGACLDAPQLPSVDFLIRTGGQQRMSNFLLWQSAYAEFYFTDILWPDFRVEDMLRALDEYRLRTRTFGGLE</sequence>
<protein>
    <recommendedName>
        <fullName evidence="1">Isoprenyl transferase</fullName>
        <ecNumber evidence="1">2.5.1.-</ecNumber>
    </recommendedName>
</protein>
<proteinExistence type="inferred from homology"/>
<evidence type="ECO:0000255" key="1">
    <source>
        <dbReference type="HAMAP-Rule" id="MF_01139"/>
    </source>
</evidence>
<dbReference type="EC" id="2.5.1.-" evidence="1"/>
<dbReference type="EMBL" id="AE000520">
    <property type="protein sequence ID" value="AAC65576.1"/>
    <property type="molecule type" value="Genomic_DNA"/>
</dbReference>
<dbReference type="PIR" id="E71304">
    <property type="entry name" value="E71304"/>
</dbReference>
<dbReference type="RefSeq" id="WP_010882049.1">
    <property type="nucleotide sequence ID" value="NC_021490.2"/>
</dbReference>
<dbReference type="SMR" id="O83612"/>
<dbReference type="IntAct" id="O83612">
    <property type="interactions" value="3"/>
</dbReference>
<dbReference type="STRING" id="243276.TP_0603"/>
<dbReference type="EnsemblBacteria" id="AAC65576">
    <property type="protein sequence ID" value="AAC65576"/>
    <property type="gene ID" value="TP_0603"/>
</dbReference>
<dbReference type="KEGG" id="tpa:TP_0603"/>
<dbReference type="KEGG" id="tpw:TPANIC_0603"/>
<dbReference type="eggNOG" id="COG0020">
    <property type="taxonomic scope" value="Bacteria"/>
</dbReference>
<dbReference type="HOGENOM" id="CLU_038505_1_1_12"/>
<dbReference type="OrthoDB" id="4191603at2"/>
<dbReference type="Proteomes" id="UP000000811">
    <property type="component" value="Chromosome"/>
</dbReference>
<dbReference type="GO" id="GO:0045547">
    <property type="term" value="F:ditrans,polycis-polyprenyl diphosphate synthase [(2E,6E)-farnesyl diphosphate specific] activity"/>
    <property type="evidence" value="ECO:0007669"/>
    <property type="project" value="TreeGrafter"/>
</dbReference>
<dbReference type="GO" id="GO:0000287">
    <property type="term" value="F:magnesium ion binding"/>
    <property type="evidence" value="ECO:0007669"/>
    <property type="project" value="UniProtKB-UniRule"/>
</dbReference>
<dbReference type="GO" id="GO:0016094">
    <property type="term" value="P:polyprenol biosynthetic process"/>
    <property type="evidence" value="ECO:0007669"/>
    <property type="project" value="TreeGrafter"/>
</dbReference>
<dbReference type="CDD" id="cd00475">
    <property type="entry name" value="Cis_IPPS"/>
    <property type="match status" value="1"/>
</dbReference>
<dbReference type="Gene3D" id="3.40.1180.10">
    <property type="entry name" value="Decaprenyl diphosphate synthase-like"/>
    <property type="match status" value="1"/>
</dbReference>
<dbReference type="HAMAP" id="MF_01139">
    <property type="entry name" value="ISPT"/>
    <property type="match status" value="1"/>
</dbReference>
<dbReference type="InterPro" id="IPR001441">
    <property type="entry name" value="UPP_synth-like"/>
</dbReference>
<dbReference type="InterPro" id="IPR018520">
    <property type="entry name" value="UPP_synth-like_CS"/>
</dbReference>
<dbReference type="InterPro" id="IPR036424">
    <property type="entry name" value="UPP_synth-like_sf"/>
</dbReference>
<dbReference type="NCBIfam" id="NF011407">
    <property type="entry name" value="PRK14833.1"/>
    <property type="match status" value="1"/>
</dbReference>
<dbReference type="NCBIfam" id="TIGR00055">
    <property type="entry name" value="uppS"/>
    <property type="match status" value="1"/>
</dbReference>
<dbReference type="PANTHER" id="PTHR10291:SF0">
    <property type="entry name" value="DEHYDRODOLICHYL DIPHOSPHATE SYNTHASE 2"/>
    <property type="match status" value="1"/>
</dbReference>
<dbReference type="PANTHER" id="PTHR10291">
    <property type="entry name" value="DEHYDRODOLICHYL DIPHOSPHATE SYNTHASE FAMILY MEMBER"/>
    <property type="match status" value="1"/>
</dbReference>
<dbReference type="Pfam" id="PF01255">
    <property type="entry name" value="Prenyltransf"/>
    <property type="match status" value="1"/>
</dbReference>
<dbReference type="SUPFAM" id="SSF64005">
    <property type="entry name" value="Undecaprenyl diphosphate synthase"/>
    <property type="match status" value="1"/>
</dbReference>
<dbReference type="PROSITE" id="PS01066">
    <property type="entry name" value="UPP_SYNTHASE"/>
    <property type="match status" value="1"/>
</dbReference>
<comment type="function">
    <text evidence="1">Catalyzes the condensation of isopentenyl diphosphate (IPP) with allylic pyrophosphates generating different type of terpenoids.</text>
</comment>
<comment type="cofactor">
    <cofactor evidence="1">
        <name>Mg(2+)</name>
        <dbReference type="ChEBI" id="CHEBI:18420"/>
    </cofactor>
    <text evidence="1">Binds 2 magnesium ions per subunit.</text>
</comment>
<comment type="subunit">
    <text evidence="1">Homodimer.</text>
</comment>
<comment type="similarity">
    <text evidence="1">Belongs to the UPP synthase family.</text>
</comment>
<gene>
    <name evidence="1" type="primary">uppS</name>
    <name type="ordered locus">TP_0603</name>
</gene>
<reference key="1">
    <citation type="journal article" date="1998" name="Science">
        <title>Complete genome sequence of Treponema pallidum, the syphilis spirochete.</title>
        <authorList>
            <person name="Fraser C.M."/>
            <person name="Norris S.J."/>
            <person name="Weinstock G.M."/>
            <person name="White O."/>
            <person name="Sutton G.G."/>
            <person name="Dodson R.J."/>
            <person name="Gwinn M.L."/>
            <person name="Hickey E.K."/>
            <person name="Clayton R.A."/>
            <person name="Ketchum K.A."/>
            <person name="Sodergren E."/>
            <person name="Hardham J.M."/>
            <person name="McLeod M.P."/>
            <person name="Salzberg S.L."/>
            <person name="Peterson J.D."/>
            <person name="Khalak H.G."/>
            <person name="Richardson D.L."/>
            <person name="Howell J.K."/>
            <person name="Chidambaram M."/>
            <person name="Utterback T.R."/>
            <person name="McDonald L.A."/>
            <person name="Artiach P."/>
            <person name="Bowman C."/>
            <person name="Cotton M.D."/>
            <person name="Fujii C."/>
            <person name="Garland S.A."/>
            <person name="Hatch B."/>
            <person name="Horst K."/>
            <person name="Roberts K.M."/>
            <person name="Sandusky M."/>
            <person name="Weidman J.F."/>
            <person name="Smith H.O."/>
            <person name="Venter J.C."/>
        </authorList>
    </citation>
    <scope>NUCLEOTIDE SEQUENCE [LARGE SCALE GENOMIC DNA]</scope>
    <source>
        <strain>Nichols</strain>
    </source>
</reference>
<accession>O83612</accession>
<keyword id="KW-0460">Magnesium</keyword>
<keyword id="KW-0479">Metal-binding</keyword>
<keyword id="KW-1185">Reference proteome</keyword>
<keyword id="KW-0808">Transferase</keyword>